<name>FRDD_SALNS</name>
<evidence type="ECO:0000255" key="1">
    <source>
        <dbReference type="HAMAP-Rule" id="MF_00709"/>
    </source>
</evidence>
<sequence>MINPNPKRSDEPVFWGLFGAGGMWGAIIAPVIVLLVGIMLPLGLFPGDALSFERVLTFAQSFIGRVFLFLMIVLPLWCGLHRMHHAMHDLKIHVPAGKWVFYGLAAILTVVTAIGVITL</sequence>
<keyword id="KW-0997">Cell inner membrane</keyword>
<keyword id="KW-1003">Cell membrane</keyword>
<keyword id="KW-0472">Membrane</keyword>
<keyword id="KW-0812">Transmembrane</keyword>
<keyword id="KW-1133">Transmembrane helix</keyword>
<gene>
    <name evidence="1" type="primary">frdD</name>
    <name type="ordered locus">SNSL254_A4701</name>
</gene>
<accession>B4T2P9</accession>
<feature type="chain" id="PRO_1000132413" description="Fumarate reductase subunit D">
    <location>
        <begin position="1"/>
        <end position="119"/>
    </location>
</feature>
<feature type="transmembrane region" description="Helical" evidence="1">
    <location>
        <begin position="25"/>
        <end position="45"/>
    </location>
</feature>
<feature type="transmembrane region" description="Helical" evidence="1">
    <location>
        <begin position="61"/>
        <end position="81"/>
    </location>
</feature>
<feature type="transmembrane region" description="Helical" evidence="1">
    <location>
        <begin position="99"/>
        <end position="119"/>
    </location>
</feature>
<protein>
    <recommendedName>
        <fullName evidence="1">Fumarate reductase subunit D</fullName>
    </recommendedName>
    <alternativeName>
        <fullName evidence="1">Fumarate reductase 13 kDa hydrophobic protein</fullName>
    </alternativeName>
    <alternativeName>
        <fullName evidence="1">Quinol-fumarate reductase subunit D</fullName>
        <shortName evidence="1">QFR subunit D</shortName>
    </alternativeName>
</protein>
<comment type="function">
    <text evidence="1">Two distinct, membrane-bound, FAD-containing enzymes are responsible for the catalysis of fumarate and succinate interconversion; fumarate reductase is used in anaerobic growth, and succinate dehydrogenase is used in aerobic growth. Anchors the catalytic components of the fumarate reductase complex to the cell inner membrane, binds quinones.</text>
</comment>
<comment type="subunit">
    <text evidence="1">Part of an enzyme complex containing four subunits: a flavoprotein (FrdA), an iron-sulfur protein (FrdB), and two hydrophobic anchor proteins (FrdC and FrdD).</text>
</comment>
<comment type="subcellular location">
    <subcellularLocation>
        <location evidence="1">Cell inner membrane</location>
        <topology evidence="1">Multi-pass membrane protein</topology>
    </subcellularLocation>
</comment>
<comment type="similarity">
    <text evidence="1">Belongs to the FrdD family.</text>
</comment>
<reference key="1">
    <citation type="journal article" date="2011" name="J. Bacteriol.">
        <title>Comparative genomics of 28 Salmonella enterica isolates: evidence for CRISPR-mediated adaptive sublineage evolution.</title>
        <authorList>
            <person name="Fricke W.F."/>
            <person name="Mammel M.K."/>
            <person name="McDermott P.F."/>
            <person name="Tartera C."/>
            <person name="White D.G."/>
            <person name="Leclerc J.E."/>
            <person name="Ravel J."/>
            <person name="Cebula T.A."/>
        </authorList>
    </citation>
    <scope>NUCLEOTIDE SEQUENCE [LARGE SCALE GENOMIC DNA]</scope>
    <source>
        <strain>SL254</strain>
    </source>
</reference>
<proteinExistence type="inferred from homology"/>
<organism>
    <name type="scientific">Salmonella newport (strain SL254)</name>
    <dbReference type="NCBI Taxonomy" id="423368"/>
    <lineage>
        <taxon>Bacteria</taxon>
        <taxon>Pseudomonadati</taxon>
        <taxon>Pseudomonadota</taxon>
        <taxon>Gammaproteobacteria</taxon>
        <taxon>Enterobacterales</taxon>
        <taxon>Enterobacteriaceae</taxon>
        <taxon>Salmonella</taxon>
    </lineage>
</organism>
<dbReference type="EMBL" id="CP001113">
    <property type="protein sequence ID" value="ACF63261.1"/>
    <property type="molecule type" value="Genomic_DNA"/>
</dbReference>
<dbReference type="RefSeq" id="WP_000609650.1">
    <property type="nucleotide sequence ID" value="NZ_CCMR01000003.1"/>
</dbReference>
<dbReference type="SMR" id="B4T2P9"/>
<dbReference type="KEGG" id="see:SNSL254_A4701"/>
<dbReference type="HOGENOM" id="CLU_168367_0_0_6"/>
<dbReference type="Proteomes" id="UP000008824">
    <property type="component" value="Chromosome"/>
</dbReference>
<dbReference type="GO" id="GO:0045283">
    <property type="term" value="C:fumarate reductase complex"/>
    <property type="evidence" value="ECO:0007669"/>
    <property type="project" value="UniProtKB-UniRule"/>
</dbReference>
<dbReference type="GO" id="GO:0005886">
    <property type="term" value="C:plasma membrane"/>
    <property type="evidence" value="ECO:0007669"/>
    <property type="project" value="UniProtKB-SubCell"/>
</dbReference>
<dbReference type="GO" id="GO:0000104">
    <property type="term" value="F:succinate dehydrogenase activity"/>
    <property type="evidence" value="ECO:0007669"/>
    <property type="project" value="UniProtKB-UniRule"/>
</dbReference>
<dbReference type="GO" id="GO:0006106">
    <property type="term" value="P:fumarate metabolic process"/>
    <property type="evidence" value="ECO:0007669"/>
    <property type="project" value="InterPro"/>
</dbReference>
<dbReference type="CDD" id="cd00547">
    <property type="entry name" value="QFR_TypeD_subunitD"/>
    <property type="match status" value="1"/>
</dbReference>
<dbReference type="FunFam" id="1.20.1300.10:FF:000002">
    <property type="entry name" value="Fumarate reductase subunit D"/>
    <property type="match status" value="1"/>
</dbReference>
<dbReference type="Gene3D" id="1.20.1300.10">
    <property type="entry name" value="Fumarate reductase/succinate dehydrogenase, transmembrane subunit"/>
    <property type="match status" value="1"/>
</dbReference>
<dbReference type="HAMAP" id="MF_00709">
    <property type="entry name" value="Fumarate_red_D"/>
    <property type="match status" value="1"/>
</dbReference>
<dbReference type="InterPro" id="IPR003418">
    <property type="entry name" value="Fumarate_red_D"/>
</dbReference>
<dbReference type="InterPro" id="IPR034804">
    <property type="entry name" value="SQR/QFR_C/D"/>
</dbReference>
<dbReference type="NCBIfam" id="NF003977">
    <property type="entry name" value="PRK05470.1-1"/>
    <property type="match status" value="1"/>
</dbReference>
<dbReference type="Pfam" id="PF02313">
    <property type="entry name" value="Fumarate_red_D"/>
    <property type="match status" value="1"/>
</dbReference>
<dbReference type="PIRSF" id="PIRSF000179">
    <property type="entry name" value="FrdD"/>
    <property type="match status" value="1"/>
</dbReference>
<dbReference type="SUPFAM" id="SSF81343">
    <property type="entry name" value="Fumarate reductase respiratory complex transmembrane subunits"/>
    <property type="match status" value="1"/>
</dbReference>